<proteinExistence type="predicted"/>
<feature type="chain" id="PRO_0000429303" description="MATH domain and coiled-coil domain-containing protein At3g58370">
    <location>
        <begin position="1"/>
        <end position="326"/>
    </location>
</feature>
<feature type="domain" description="MATH" evidence="2">
    <location>
        <begin position="7"/>
        <end position="133"/>
    </location>
</feature>
<feature type="coiled-coil region" evidence="1">
    <location>
        <begin position="259"/>
        <end position="312"/>
    </location>
</feature>
<protein>
    <recommendedName>
        <fullName>MATH domain and coiled-coil domain-containing protein At3g58370</fullName>
    </recommendedName>
    <alternativeName>
        <fullName>RTM3-like protein At3g58370</fullName>
    </alternativeName>
</protein>
<organism>
    <name type="scientific">Arabidopsis thaliana</name>
    <name type="common">Mouse-ear cress</name>
    <dbReference type="NCBI Taxonomy" id="3702"/>
    <lineage>
        <taxon>Eukaryota</taxon>
        <taxon>Viridiplantae</taxon>
        <taxon>Streptophyta</taxon>
        <taxon>Embryophyta</taxon>
        <taxon>Tracheophyta</taxon>
        <taxon>Spermatophyta</taxon>
        <taxon>Magnoliopsida</taxon>
        <taxon>eudicotyledons</taxon>
        <taxon>Gunneridae</taxon>
        <taxon>Pentapetalae</taxon>
        <taxon>rosids</taxon>
        <taxon>malvids</taxon>
        <taxon>Brassicales</taxon>
        <taxon>Brassicaceae</taxon>
        <taxon>Camelineae</taxon>
        <taxon>Arabidopsis</taxon>
    </lineage>
</organism>
<gene>
    <name type="ordered locus">At3g58370</name>
    <name type="ORF">F9D24.280</name>
</gene>
<comment type="sequence caution" evidence="3">
    <conflict type="erroneous gene model prediction">
        <sequence resource="EMBL-CDS" id="CAB68175"/>
    </conflict>
</comment>
<evidence type="ECO:0000255" key="1"/>
<evidence type="ECO:0000255" key="2">
    <source>
        <dbReference type="PROSITE-ProRule" id="PRU00129"/>
    </source>
</evidence>
<evidence type="ECO:0000305" key="3"/>
<sequence length="326" mass="37065">MESEEVDNKFTWVIKNFSTLQYDKIYSDPFVIGGCKWHLLAYPKGNKFNNSLSLYLVVDDARALPCGWRRYAQFSLTIINQLTDKLSQRGEKQNWFNQRNLGSGFTSMIPLPNLHAKNAGYLVNGEVKIVVEINDLEVIGKLDVSEESEETNQPLKKIKLDDNDAVSFDSLNETSPVKESIDVNGFQVLPSQVESVKCIFERHPDFASKFRPKNRHLKSTYMTVLLGLIKTLCQLPEELTDDDLDEASVAVSYVENGGLRLDWLEKKLAEVKAKKKKVETGKARLQRAEEELQKLNQKCLELKAFLEKENADVSEANVPLSFEDVV</sequence>
<reference key="1">
    <citation type="journal article" date="2000" name="Nature">
        <title>Sequence and analysis of chromosome 3 of the plant Arabidopsis thaliana.</title>
        <authorList>
            <person name="Salanoubat M."/>
            <person name="Lemcke K."/>
            <person name="Rieger M."/>
            <person name="Ansorge W."/>
            <person name="Unseld M."/>
            <person name="Fartmann B."/>
            <person name="Valle G."/>
            <person name="Bloecker H."/>
            <person name="Perez-Alonso M."/>
            <person name="Obermaier B."/>
            <person name="Delseny M."/>
            <person name="Boutry M."/>
            <person name="Grivell L.A."/>
            <person name="Mache R."/>
            <person name="Puigdomenech P."/>
            <person name="De Simone V."/>
            <person name="Choisne N."/>
            <person name="Artiguenave F."/>
            <person name="Robert C."/>
            <person name="Brottier P."/>
            <person name="Wincker P."/>
            <person name="Cattolico L."/>
            <person name="Weissenbach J."/>
            <person name="Saurin W."/>
            <person name="Quetier F."/>
            <person name="Schaefer M."/>
            <person name="Mueller-Auer S."/>
            <person name="Gabel C."/>
            <person name="Fuchs M."/>
            <person name="Benes V."/>
            <person name="Wurmbach E."/>
            <person name="Drzonek H."/>
            <person name="Erfle H."/>
            <person name="Jordan N."/>
            <person name="Bangert S."/>
            <person name="Wiedelmann R."/>
            <person name="Kranz H."/>
            <person name="Voss H."/>
            <person name="Holland R."/>
            <person name="Brandt P."/>
            <person name="Nyakatura G."/>
            <person name="Vezzi A."/>
            <person name="D'Angelo M."/>
            <person name="Pallavicini A."/>
            <person name="Toppo S."/>
            <person name="Simionati B."/>
            <person name="Conrad A."/>
            <person name="Hornischer K."/>
            <person name="Kauer G."/>
            <person name="Loehnert T.-H."/>
            <person name="Nordsiek G."/>
            <person name="Reichelt J."/>
            <person name="Scharfe M."/>
            <person name="Schoen O."/>
            <person name="Bargues M."/>
            <person name="Terol J."/>
            <person name="Climent J."/>
            <person name="Navarro P."/>
            <person name="Collado C."/>
            <person name="Perez-Perez A."/>
            <person name="Ottenwaelder B."/>
            <person name="Duchemin D."/>
            <person name="Cooke R."/>
            <person name="Laudie M."/>
            <person name="Berger-Llauro C."/>
            <person name="Purnelle B."/>
            <person name="Masuy D."/>
            <person name="de Haan M."/>
            <person name="Maarse A.C."/>
            <person name="Alcaraz J.-P."/>
            <person name="Cottet A."/>
            <person name="Casacuberta E."/>
            <person name="Monfort A."/>
            <person name="Argiriou A."/>
            <person name="Flores M."/>
            <person name="Liguori R."/>
            <person name="Vitale D."/>
            <person name="Mannhaupt G."/>
            <person name="Haase D."/>
            <person name="Schoof H."/>
            <person name="Rudd S."/>
            <person name="Zaccaria P."/>
            <person name="Mewes H.-W."/>
            <person name="Mayer K.F.X."/>
            <person name="Kaul S."/>
            <person name="Town C.D."/>
            <person name="Koo H.L."/>
            <person name="Tallon L.J."/>
            <person name="Jenkins J."/>
            <person name="Rooney T."/>
            <person name="Rizzo M."/>
            <person name="Walts A."/>
            <person name="Utterback T."/>
            <person name="Fujii C.Y."/>
            <person name="Shea T.P."/>
            <person name="Creasy T.H."/>
            <person name="Haas B."/>
            <person name="Maiti R."/>
            <person name="Wu D."/>
            <person name="Peterson J."/>
            <person name="Van Aken S."/>
            <person name="Pai G."/>
            <person name="Militscher J."/>
            <person name="Sellers P."/>
            <person name="Gill J.E."/>
            <person name="Feldblyum T.V."/>
            <person name="Preuss D."/>
            <person name="Lin X."/>
            <person name="Nierman W.C."/>
            <person name="Salzberg S.L."/>
            <person name="White O."/>
            <person name="Venter J.C."/>
            <person name="Fraser C.M."/>
            <person name="Kaneko T."/>
            <person name="Nakamura Y."/>
            <person name="Sato S."/>
            <person name="Kato T."/>
            <person name="Asamizu E."/>
            <person name="Sasamoto S."/>
            <person name="Kimura T."/>
            <person name="Idesawa K."/>
            <person name="Kawashima K."/>
            <person name="Kishida Y."/>
            <person name="Kiyokawa C."/>
            <person name="Kohara M."/>
            <person name="Matsumoto M."/>
            <person name="Matsuno A."/>
            <person name="Muraki A."/>
            <person name="Nakayama S."/>
            <person name="Nakazaki N."/>
            <person name="Shinpo S."/>
            <person name="Takeuchi C."/>
            <person name="Wada T."/>
            <person name="Watanabe A."/>
            <person name="Yamada M."/>
            <person name="Yasuda M."/>
            <person name="Tabata S."/>
        </authorList>
    </citation>
    <scope>NUCLEOTIDE SEQUENCE [LARGE SCALE GENOMIC DNA]</scope>
    <source>
        <strain>cv. Columbia</strain>
    </source>
</reference>
<reference key="2">
    <citation type="journal article" date="2017" name="Plant J.">
        <title>Araport11: a complete reannotation of the Arabidopsis thaliana reference genome.</title>
        <authorList>
            <person name="Cheng C.Y."/>
            <person name="Krishnakumar V."/>
            <person name="Chan A.P."/>
            <person name="Thibaud-Nissen F."/>
            <person name="Schobel S."/>
            <person name="Town C.D."/>
        </authorList>
    </citation>
    <scope>GENOME REANNOTATION</scope>
    <source>
        <strain>cv. Columbia</strain>
    </source>
</reference>
<reference key="3">
    <citation type="journal article" date="2010" name="Plant Physiol.">
        <title>RTM3, which controls long-distance movement of potyviruses, is a member of a new plant gene family encoding a meprin and TRAF homology domain-containing protein.</title>
        <authorList>
            <person name="Cosson P."/>
            <person name="Sofer L."/>
            <person name="Le Q.H."/>
            <person name="Leger V."/>
            <person name="Schurdi-Levraud V."/>
            <person name="Whitham S.A."/>
            <person name="Yamamoto M.L."/>
            <person name="Gopalan S."/>
            <person name="Le Gall O."/>
            <person name="Candresse T."/>
            <person name="Carrington J.C."/>
            <person name="Revers F."/>
        </authorList>
    </citation>
    <scope>GENE FAMILY</scope>
</reference>
<name>MCC26_ARATH</name>
<dbReference type="EMBL" id="AL137081">
    <property type="protein sequence ID" value="CAB68175.1"/>
    <property type="status" value="ALT_SEQ"/>
    <property type="molecule type" value="Genomic_DNA"/>
</dbReference>
<dbReference type="EMBL" id="CP002686">
    <property type="status" value="NOT_ANNOTATED_CDS"/>
    <property type="molecule type" value="Genomic_DNA"/>
</dbReference>
<dbReference type="PIR" id="T45997">
    <property type="entry name" value="T45997"/>
</dbReference>
<dbReference type="SMR" id="Q9M2H9"/>
<dbReference type="FunCoup" id="Q9M2H9">
    <property type="interactions" value="53"/>
</dbReference>
<dbReference type="PaxDb" id="3702-AT3G58370.1"/>
<dbReference type="DNASU" id="825006"/>
<dbReference type="Araport" id="AT3G58370"/>
<dbReference type="TAIR" id="AT3G58370"/>
<dbReference type="eggNOG" id="KOG1987">
    <property type="taxonomic scope" value="Eukaryota"/>
</dbReference>
<dbReference type="HOGENOM" id="CLU_026537_2_0_1"/>
<dbReference type="InParanoid" id="Q9M2H9"/>
<dbReference type="PRO" id="PR:Q9M2H9"/>
<dbReference type="Proteomes" id="UP000006548">
    <property type="component" value="Chromosome 3"/>
</dbReference>
<dbReference type="ExpressionAtlas" id="Q9M2H9">
    <property type="expression patterns" value="baseline"/>
</dbReference>
<dbReference type="CDD" id="cd00121">
    <property type="entry name" value="MATH"/>
    <property type="match status" value="1"/>
</dbReference>
<dbReference type="Gene3D" id="2.60.210.10">
    <property type="entry name" value="Apoptosis, Tumor Necrosis Factor Receptor Associated Protein 2, Chain A"/>
    <property type="match status" value="1"/>
</dbReference>
<dbReference type="InterPro" id="IPR050804">
    <property type="entry name" value="MATH-CC_domain_protein"/>
</dbReference>
<dbReference type="InterPro" id="IPR002083">
    <property type="entry name" value="MATH/TRAF_dom"/>
</dbReference>
<dbReference type="InterPro" id="IPR008974">
    <property type="entry name" value="TRAF-like"/>
</dbReference>
<dbReference type="PANTHER" id="PTHR46236:SF4">
    <property type="entry name" value="MATH DOMAIN-CONTAINING PROTEIN"/>
    <property type="match status" value="1"/>
</dbReference>
<dbReference type="PANTHER" id="PTHR46236">
    <property type="entry name" value="TRAF-LIKE SUPERFAMILY PROTEIN"/>
    <property type="match status" value="1"/>
</dbReference>
<dbReference type="Pfam" id="PF22486">
    <property type="entry name" value="MATH_2"/>
    <property type="match status" value="1"/>
</dbReference>
<dbReference type="SMART" id="SM00061">
    <property type="entry name" value="MATH"/>
    <property type="match status" value="1"/>
</dbReference>
<dbReference type="SUPFAM" id="SSF49599">
    <property type="entry name" value="TRAF domain-like"/>
    <property type="match status" value="1"/>
</dbReference>
<dbReference type="PROSITE" id="PS50144">
    <property type="entry name" value="MATH"/>
    <property type="match status" value="1"/>
</dbReference>
<accession>Q9M2H9</accession>
<keyword id="KW-0175">Coiled coil</keyword>
<keyword id="KW-1185">Reference proteome</keyword>